<sequence length="295" mass="31764">MTKILGSDLIKRGMAQMQKGGVIMDVVSAEQARIAEAAGAVAVMALERVPSDIRAAGGVARMANTAIVREVMEAVSIPVMAKARIGHIVEARVLEAMGVDYIDESEVLTPADEKFHLLKSDYTVPFVCGCRDLGEALRRIGEGASMLRTKGEPGTGNVVEAVRHLRKVNAQLRKVINMSHDELMTEAKHLGAPFELLLQIKTLGKLPVVNFAAGGIATPADAALMMELGADGVFVGSGIFKSENPEKFAKAIVQATTHYQDYDLIARLSADLGEPMRGLEISELAVQDRMQERGW</sequence>
<organism>
    <name type="scientific">Actinobacillus pleuropneumoniae serotype 3 (strain JL03)</name>
    <dbReference type="NCBI Taxonomy" id="434271"/>
    <lineage>
        <taxon>Bacteria</taxon>
        <taxon>Pseudomonadati</taxon>
        <taxon>Pseudomonadota</taxon>
        <taxon>Gammaproteobacteria</taxon>
        <taxon>Pasteurellales</taxon>
        <taxon>Pasteurellaceae</taxon>
        <taxon>Actinobacillus</taxon>
    </lineage>
</organism>
<keyword id="KW-0456">Lyase</keyword>
<keyword id="KW-0663">Pyridoxal phosphate</keyword>
<keyword id="KW-0704">Schiff base</keyword>
<proteinExistence type="inferred from homology"/>
<dbReference type="EC" id="4.3.3.6" evidence="1"/>
<dbReference type="EMBL" id="CP000687">
    <property type="protein sequence ID" value="ABY69135.1"/>
    <property type="molecule type" value="Genomic_DNA"/>
</dbReference>
<dbReference type="RefSeq" id="WP_012262859.1">
    <property type="nucleotide sequence ID" value="NC_010278.1"/>
</dbReference>
<dbReference type="SMR" id="B0BUD0"/>
<dbReference type="KEGG" id="apj:APJL_0565"/>
<dbReference type="HOGENOM" id="CLU_055352_1_0_6"/>
<dbReference type="UniPathway" id="UPA00245"/>
<dbReference type="Proteomes" id="UP000008547">
    <property type="component" value="Chromosome"/>
</dbReference>
<dbReference type="GO" id="GO:0036381">
    <property type="term" value="F:pyridoxal 5'-phosphate synthase (glutamine hydrolysing) activity"/>
    <property type="evidence" value="ECO:0007669"/>
    <property type="project" value="UniProtKB-UniRule"/>
</dbReference>
<dbReference type="GO" id="GO:0006520">
    <property type="term" value="P:amino acid metabolic process"/>
    <property type="evidence" value="ECO:0007669"/>
    <property type="project" value="TreeGrafter"/>
</dbReference>
<dbReference type="GO" id="GO:0042823">
    <property type="term" value="P:pyridoxal phosphate biosynthetic process"/>
    <property type="evidence" value="ECO:0007669"/>
    <property type="project" value="UniProtKB-UniRule"/>
</dbReference>
<dbReference type="GO" id="GO:0008615">
    <property type="term" value="P:pyridoxine biosynthetic process"/>
    <property type="evidence" value="ECO:0007669"/>
    <property type="project" value="TreeGrafter"/>
</dbReference>
<dbReference type="CDD" id="cd04727">
    <property type="entry name" value="pdxS"/>
    <property type="match status" value="1"/>
</dbReference>
<dbReference type="FunFam" id="3.20.20.70:FF:000001">
    <property type="entry name" value="Pyridoxine biosynthesis protein PDX1"/>
    <property type="match status" value="1"/>
</dbReference>
<dbReference type="Gene3D" id="3.20.20.70">
    <property type="entry name" value="Aldolase class I"/>
    <property type="match status" value="1"/>
</dbReference>
<dbReference type="HAMAP" id="MF_01824">
    <property type="entry name" value="PdxS"/>
    <property type="match status" value="1"/>
</dbReference>
<dbReference type="InterPro" id="IPR013785">
    <property type="entry name" value="Aldolase_TIM"/>
</dbReference>
<dbReference type="InterPro" id="IPR001852">
    <property type="entry name" value="PdxS/SNZ"/>
</dbReference>
<dbReference type="InterPro" id="IPR033755">
    <property type="entry name" value="PdxS/SNZ_N"/>
</dbReference>
<dbReference type="InterPro" id="IPR011060">
    <property type="entry name" value="RibuloseP-bd_barrel"/>
</dbReference>
<dbReference type="NCBIfam" id="NF003215">
    <property type="entry name" value="PRK04180.1"/>
    <property type="match status" value="1"/>
</dbReference>
<dbReference type="NCBIfam" id="TIGR00343">
    <property type="entry name" value="pyridoxal 5'-phosphate synthase lyase subunit PdxS"/>
    <property type="match status" value="1"/>
</dbReference>
<dbReference type="PANTHER" id="PTHR31829">
    <property type="entry name" value="PYRIDOXAL 5'-PHOSPHATE SYNTHASE SUBUNIT SNZ1-RELATED"/>
    <property type="match status" value="1"/>
</dbReference>
<dbReference type="PANTHER" id="PTHR31829:SF0">
    <property type="entry name" value="PYRIDOXAL 5'-PHOSPHATE SYNTHASE SUBUNIT SNZ1-RELATED"/>
    <property type="match status" value="1"/>
</dbReference>
<dbReference type="Pfam" id="PF01680">
    <property type="entry name" value="SOR_SNZ"/>
    <property type="match status" value="1"/>
</dbReference>
<dbReference type="PIRSF" id="PIRSF029271">
    <property type="entry name" value="Pdx1"/>
    <property type="match status" value="1"/>
</dbReference>
<dbReference type="SUPFAM" id="SSF51366">
    <property type="entry name" value="Ribulose-phoshate binding barrel"/>
    <property type="match status" value="1"/>
</dbReference>
<dbReference type="PROSITE" id="PS01235">
    <property type="entry name" value="PDXS_SNZ_1"/>
    <property type="match status" value="1"/>
</dbReference>
<dbReference type="PROSITE" id="PS51129">
    <property type="entry name" value="PDXS_SNZ_2"/>
    <property type="match status" value="1"/>
</dbReference>
<evidence type="ECO:0000255" key="1">
    <source>
        <dbReference type="HAMAP-Rule" id="MF_01824"/>
    </source>
</evidence>
<feature type="chain" id="PRO_1000188202" description="Pyridoxal 5'-phosphate synthase subunit PdxS">
    <location>
        <begin position="1"/>
        <end position="295"/>
    </location>
</feature>
<feature type="active site" description="Schiff-base intermediate with D-ribose 5-phosphate" evidence="1">
    <location>
        <position position="82"/>
    </location>
</feature>
<feature type="binding site" evidence="1">
    <location>
        <position position="25"/>
    </location>
    <ligand>
        <name>D-ribose 5-phosphate</name>
        <dbReference type="ChEBI" id="CHEBI:78346"/>
    </ligand>
</feature>
<feature type="binding site" evidence="1">
    <location>
        <position position="154"/>
    </location>
    <ligand>
        <name>D-ribose 5-phosphate</name>
        <dbReference type="ChEBI" id="CHEBI:78346"/>
    </ligand>
</feature>
<feature type="binding site" evidence="1">
    <location>
        <position position="166"/>
    </location>
    <ligand>
        <name>D-glyceraldehyde 3-phosphate</name>
        <dbReference type="ChEBI" id="CHEBI:59776"/>
    </ligand>
</feature>
<feature type="binding site" evidence="1">
    <location>
        <position position="215"/>
    </location>
    <ligand>
        <name>D-ribose 5-phosphate</name>
        <dbReference type="ChEBI" id="CHEBI:78346"/>
    </ligand>
</feature>
<feature type="binding site" evidence="1">
    <location>
        <begin position="236"/>
        <end position="237"/>
    </location>
    <ligand>
        <name>D-ribose 5-phosphate</name>
        <dbReference type="ChEBI" id="CHEBI:78346"/>
    </ligand>
</feature>
<reference key="1">
    <citation type="journal article" date="2008" name="PLoS ONE">
        <title>Genome biology of Actinobacillus pleuropneumoniae JL03, an isolate of serotype 3 prevalent in China.</title>
        <authorList>
            <person name="Xu Z."/>
            <person name="Zhou Y."/>
            <person name="Li L."/>
            <person name="Zhou R."/>
            <person name="Xiao S."/>
            <person name="Wan Y."/>
            <person name="Zhang S."/>
            <person name="Wang K."/>
            <person name="Li W."/>
            <person name="Li L."/>
            <person name="Jin H."/>
            <person name="Kang M."/>
            <person name="Dalai B."/>
            <person name="Li T."/>
            <person name="Liu L."/>
            <person name="Cheng Y."/>
            <person name="Zhang L."/>
            <person name="Xu T."/>
            <person name="Zheng H."/>
            <person name="Pu S."/>
            <person name="Wang B."/>
            <person name="Gu W."/>
            <person name="Zhang X.L."/>
            <person name="Zhu G.-F."/>
            <person name="Wang S."/>
            <person name="Zhao G.-P."/>
            <person name="Chen H."/>
        </authorList>
    </citation>
    <scope>NUCLEOTIDE SEQUENCE [LARGE SCALE GENOMIC DNA]</scope>
    <source>
        <strain>JL03</strain>
    </source>
</reference>
<gene>
    <name evidence="1" type="primary">pdxS</name>
    <name type="ordered locus">APJL_0565</name>
</gene>
<comment type="function">
    <text evidence="1">Catalyzes the formation of pyridoxal 5'-phosphate from ribose 5-phosphate (RBP), glyceraldehyde 3-phosphate (G3P) and ammonia. The ammonia is provided by the PdxT subunit. Can also use ribulose 5-phosphate and dihydroxyacetone phosphate as substrates, resulting from enzyme-catalyzed isomerization of RBP and G3P, respectively.</text>
</comment>
<comment type="catalytic activity">
    <reaction evidence="1">
        <text>aldehydo-D-ribose 5-phosphate + D-glyceraldehyde 3-phosphate + L-glutamine = pyridoxal 5'-phosphate + L-glutamate + phosphate + 3 H2O + H(+)</text>
        <dbReference type="Rhea" id="RHEA:31507"/>
        <dbReference type="ChEBI" id="CHEBI:15377"/>
        <dbReference type="ChEBI" id="CHEBI:15378"/>
        <dbReference type="ChEBI" id="CHEBI:29985"/>
        <dbReference type="ChEBI" id="CHEBI:43474"/>
        <dbReference type="ChEBI" id="CHEBI:58273"/>
        <dbReference type="ChEBI" id="CHEBI:58359"/>
        <dbReference type="ChEBI" id="CHEBI:59776"/>
        <dbReference type="ChEBI" id="CHEBI:597326"/>
        <dbReference type="EC" id="4.3.3.6"/>
    </reaction>
</comment>
<comment type="pathway">
    <text evidence="1">Cofactor biosynthesis; pyridoxal 5'-phosphate biosynthesis.</text>
</comment>
<comment type="subunit">
    <text evidence="1">In the presence of PdxT, forms a dodecamer of heterodimers.</text>
</comment>
<comment type="similarity">
    <text evidence="1">Belongs to the PdxS/SNZ family.</text>
</comment>
<accession>B0BUD0</accession>
<name>PDXS_ACTPJ</name>
<protein>
    <recommendedName>
        <fullName evidence="1">Pyridoxal 5'-phosphate synthase subunit PdxS</fullName>
        <shortName evidence="1">PLP synthase subunit PdxS</shortName>
        <ecNumber evidence="1">4.3.3.6</ecNumber>
    </recommendedName>
    <alternativeName>
        <fullName evidence="1">Pdx1</fullName>
    </alternativeName>
</protein>